<protein>
    <recommendedName>
        <fullName evidence="3">NAD-dependent protein deacetylase sirtuin-1</fullName>
        <ecNumber evidence="4 5">2.3.1.286</ecNumber>
    </recommendedName>
    <alternativeName>
        <fullName>NAD-dependent protein deacylase sirtuin-1</fullName>
        <ecNumber evidence="3">2.3.1.-</ecNumber>
    </alternativeName>
</protein>
<gene>
    <name evidence="8" type="primary">Sirt1</name>
</gene>
<reference key="1">
    <citation type="journal article" date="2004" name="Nature">
        <title>Genome sequence of the Brown Norway rat yields insights into mammalian evolution.</title>
        <authorList>
            <person name="Gibbs R.A."/>
            <person name="Weinstock G.M."/>
            <person name="Metzker M.L."/>
            <person name="Muzny D.M."/>
            <person name="Sodergren E.J."/>
            <person name="Scherer S."/>
            <person name="Scott G."/>
            <person name="Steffen D."/>
            <person name="Worley K.C."/>
            <person name="Burch P.E."/>
            <person name="Okwuonu G."/>
            <person name="Hines S."/>
            <person name="Lewis L."/>
            <person name="Deramo C."/>
            <person name="Delgado O."/>
            <person name="Dugan-Rocha S."/>
            <person name="Miner G."/>
            <person name="Morgan M."/>
            <person name="Hawes A."/>
            <person name="Gill R."/>
            <person name="Holt R.A."/>
            <person name="Adams M.D."/>
            <person name="Amanatides P.G."/>
            <person name="Baden-Tillson H."/>
            <person name="Barnstead M."/>
            <person name="Chin S."/>
            <person name="Evans C.A."/>
            <person name="Ferriera S."/>
            <person name="Fosler C."/>
            <person name="Glodek A."/>
            <person name="Gu Z."/>
            <person name="Jennings D."/>
            <person name="Kraft C.L."/>
            <person name="Nguyen T."/>
            <person name="Pfannkoch C.M."/>
            <person name="Sitter C."/>
            <person name="Sutton G.G."/>
            <person name="Venter J.C."/>
            <person name="Woodage T."/>
            <person name="Smith D."/>
            <person name="Lee H.-M."/>
            <person name="Gustafson E."/>
            <person name="Cahill P."/>
            <person name="Kana A."/>
            <person name="Doucette-Stamm L."/>
            <person name="Weinstock K."/>
            <person name="Fechtel K."/>
            <person name="Weiss R.B."/>
            <person name="Dunn D.M."/>
            <person name="Green E.D."/>
            <person name="Blakesley R.W."/>
            <person name="Bouffard G.G."/>
            <person name="De Jong P.J."/>
            <person name="Osoegawa K."/>
            <person name="Zhu B."/>
            <person name="Marra M."/>
            <person name="Schein J."/>
            <person name="Bosdet I."/>
            <person name="Fjell C."/>
            <person name="Jones S."/>
            <person name="Krzywinski M."/>
            <person name="Mathewson C."/>
            <person name="Siddiqui A."/>
            <person name="Wye N."/>
            <person name="McPherson J."/>
            <person name="Zhao S."/>
            <person name="Fraser C.M."/>
            <person name="Shetty J."/>
            <person name="Shatsman S."/>
            <person name="Geer K."/>
            <person name="Chen Y."/>
            <person name="Abramzon S."/>
            <person name="Nierman W.C."/>
            <person name="Havlak P.H."/>
            <person name="Chen R."/>
            <person name="Durbin K.J."/>
            <person name="Egan A."/>
            <person name="Ren Y."/>
            <person name="Song X.-Z."/>
            <person name="Li B."/>
            <person name="Liu Y."/>
            <person name="Qin X."/>
            <person name="Cawley S."/>
            <person name="Cooney A.J."/>
            <person name="D'Souza L.M."/>
            <person name="Martin K."/>
            <person name="Wu J.Q."/>
            <person name="Gonzalez-Garay M.L."/>
            <person name="Jackson A.R."/>
            <person name="Kalafus K.J."/>
            <person name="McLeod M.P."/>
            <person name="Milosavljevic A."/>
            <person name="Virk D."/>
            <person name="Volkov A."/>
            <person name="Wheeler D.A."/>
            <person name="Zhang Z."/>
            <person name="Bailey J.A."/>
            <person name="Eichler E.E."/>
            <person name="Tuzun E."/>
            <person name="Birney E."/>
            <person name="Mongin E."/>
            <person name="Ureta-Vidal A."/>
            <person name="Woodwark C."/>
            <person name="Zdobnov E."/>
            <person name="Bork P."/>
            <person name="Suyama M."/>
            <person name="Torrents D."/>
            <person name="Alexandersson M."/>
            <person name="Trask B.J."/>
            <person name="Young J.M."/>
            <person name="Huang H."/>
            <person name="Wang H."/>
            <person name="Xing H."/>
            <person name="Daniels S."/>
            <person name="Gietzen D."/>
            <person name="Schmidt J."/>
            <person name="Stevens K."/>
            <person name="Vitt U."/>
            <person name="Wingrove J."/>
            <person name="Camara F."/>
            <person name="Mar Alba M."/>
            <person name="Abril J.F."/>
            <person name="Guigo R."/>
            <person name="Smit A."/>
            <person name="Dubchak I."/>
            <person name="Rubin E.M."/>
            <person name="Couronne O."/>
            <person name="Poliakov A."/>
            <person name="Huebner N."/>
            <person name="Ganten D."/>
            <person name="Goesele C."/>
            <person name="Hummel O."/>
            <person name="Kreitler T."/>
            <person name="Lee Y.-A."/>
            <person name="Monti J."/>
            <person name="Schulz H."/>
            <person name="Zimdahl H."/>
            <person name="Himmelbauer H."/>
            <person name="Lehrach H."/>
            <person name="Jacob H.J."/>
            <person name="Bromberg S."/>
            <person name="Gullings-Handley J."/>
            <person name="Jensen-Seaman M.I."/>
            <person name="Kwitek A.E."/>
            <person name="Lazar J."/>
            <person name="Pasko D."/>
            <person name="Tonellato P.J."/>
            <person name="Twigger S."/>
            <person name="Ponting C.P."/>
            <person name="Duarte J.M."/>
            <person name="Rice S."/>
            <person name="Goodstadt L."/>
            <person name="Beatson S.A."/>
            <person name="Emes R.D."/>
            <person name="Winter E.E."/>
            <person name="Webber C."/>
            <person name="Brandt P."/>
            <person name="Nyakatura G."/>
            <person name="Adetobi M."/>
            <person name="Chiaromonte F."/>
            <person name="Elnitski L."/>
            <person name="Eswara P."/>
            <person name="Hardison R.C."/>
            <person name="Hou M."/>
            <person name="Kolbe D."/>
            <person name="Makova K."/>
            <person name="Miller W."/>
            <person name="Nekrutenko A."/>
            <person name="Riemer C."/>
            <person name="Schwartz S."/>
            <person name="Taylor J."/>
            <person name="Yang S."/>
            <person name="Zhang Y."/>
            <person name="Lindpaintner K."/>
            <person name="Andrews T.D."/>
            <person name="Caccamo M."/>
            <person name="Clamp M."/>
            <person name="Clarke L."/>
            <person name="Curwen V."/>
            <person name="Durbin R.M."/>
            <person name="Eyras E."/>
            <person name="Searle S.M."/>
            <person name="Cooper G.M."/>
            <person name="Batzoglou S."/>
            <person name="Brudno M."/>
            <person name="Sidow A."/>
            <person name="Stone E.A."/>
            <person name="Payseur B.A."/>
            <person name="Bourque G."/>
            <person name="Lopez-Otin C."/>
            <person name="Puente X.S."/>
            <person name="Chakrabarti K."/>
            <person name="Chatterji S."/>
            <person name="Dewey C."/>
            <person name="Pachter L."/>
            <person name="Bray N."/>
            <person name="Yap V.B."/>
            <person name="Caspi A."/>
            <person name="Tesler G."/>
            <person name="Pevzner P.A."/>
            <person name="Haussler D."/>
            <person name="Roskin K.M."/>
            <person name="Baertsch R."/>
            <person name="Clawson H."/>
            <person name="Furey T.S."/>
            <person name="Hinrichs A.S."/>
            <person name="Karolchik D."/>
            <person name="Kent W.J."/>
            <person name="Rosenbloom K.R."/>
            <person name="Trumbower H."/>
            <person name="Weirauch M."/>
            <person name="Cooper D.N."/>
            <person name="Stenson P.D."/>
            <person name="Ma B."/>
            <person name="Brent M."/>
            <person name="Arumugam M."/>
            <person name="Shteynberg D."/>
            <person name="Copley R.R."/>
            <person name="Taylor M.S."/>
            <person name="Riethman H."/>
            <person name="Mudunuri U."/>
            <person name="Peterson J."/>
            <person name="Guyer M."/>
            <person name="Felsenfeld A."/>
            <person name="Old S."/>
            <person name="Mockrin S."/>
            <person name="Collins F.S."/>
        </authorList>
    </citation>
    <scope>NUCLEOTIDE SEQUENCE [LARGE SCALE GENOMIC DNA]</scope>
    <source>
        <strain>Brown Norway</strain>
    </source>
</reference>
<sequence>MIGTDPRTILKDLLPETIPPPELDDMTLWQIVINILSEPPKRKKRKDINTIEDAVKLLQECKKIIVLTGAGVSVSCGIPDFRSRDGIYARLAVDFPDLPDPQAMFDIEYFRKDPRPFFKFAKEIYPGQFQPSLCHKFIALSDKEGKLLRNYTQNIDTLEQVAGIQRIIQCHGSFATASCLICKYKVDCEAVRGDIFNQVVPRCPRCPADEPLAIMKPEIVFFGENLPEQFHRAMKYDKDEVDLLIVIGSSLKVRPVALIPSSIPHEVPQILINREPLPHLHFDVELLGDCDVIINELCHRLGGEYAKLCCNPVKLSEITEKPPRTQKELVHLSELPPTPLHISEDSSSPERTVPQDSSVIATLVDQTIKNKVDDLEVSEPKSCVEEKSQEVQTYRNVESINVENPDFKAVGSSTGDKNERTSVAETVRKCWPNRLAKEQISKRLDGNQYLFVPPNRYIFHGAEVYSDSEDDALSSSSCGSNSDSGTCQSPSLEEPLEDESEIEEFYNGLEDDADRPECAGGSGADGGDQEAVNEAIAMKQELTDVNCTPDKSEHY</sequence>
<comment type="function">
    <text evidence="3 4">NAD-dependent protein deacetylase that links transcriptional regulation directly to intracellular energetics and participates in the coordination of several separated cellular functions such as cell cycle, response to DNA damage, metabolism, apoptosis and autophagy. Can modulate chromatin function through deacetylation of histones and can promote alterations in the methylation of histones and DNA, leading to transcriptional repression. Deacetylates a broad range of transcription factors and coregulators, thereby regulating target gene expression positively and negatively. Serves as a sensor of the cytosolic ratio of NAD(+)/NADH which is altered by glucose deprivation and metabolic changes associated with caloric restriction. Is essential in skeletal muscle cell differentiation and in response to low nutrients mediates the inhibitory effect on skeletal myoblast differentiation which also involves 5'-AMP-activated protein kinase (AMPK) and nicotinamide phosphoribosyltransferase (NAMPT). Component of the eNoSC (energy-dependent nucleolar silencing) complex, a complex that mediates silencing of rDNA in response to intracellular energy status and acts by recruiting histone-modifying enzymes. The eNoSC complex is able to sense the energy status of cell: upon glucose starvation, elevation of NAD(+)/NADP(+) ratio activates SIRT1, leading to histone H3 deacetylation followed by dimethylation of H3 at 'Lys-9' (H3K9me2) by SUV39H1 and the formation of silent chromatin in the rDNA locus. Deacetylates 'Lys-266' of SUV39H1, leading to its activation. Inhibits skeletal muscle differentiation by deacetylating PCAF and MYOD1. Deacetylates H2A and 'Lys-26' of H1-4. Deacetylates 'Lys-16' of histone H4 (in vitro). Involved in NR0B2/SHP corepression function through chromatin remodeling: Recruited to LRH1 target gene promoters by NR0B2/SHP thereby stimulating histone H3 and H4 deacetylation leading to transcriptional repression. Proposed to contribute to genomic integrity via positive regulation of telomere length; however, reports on localization to pericentromeric heterochromatin are conflicting. Proposed to play a role in constitutive heterochromatin (CH) formation and/or maintenance through regulation of the available pool of nuclear SUV39H1. Upon oxidative/metabolic stress decreases SUV39H1 degradation by inhibiting SUV39H1 polyubiquitination by MDM2. This increase in SUV39H1 levels enhances SUV39H1 turnover in CH, which in turn seems to accelerate renewal of the heterochromatin which correlates with greater genomic integrity during stress response. Deacetylates 'Lys-382' of p53/TP53 and impairs its ability to induce transcription-dependent proapoptotic program and modulate cell senescence. Deacetylates TAF1B and thereby represses rDNA transcription by the RNA polymerase I. Deacetylates MYC, promotes the association of MYC with MAX and decreases MYC stability leading to compromised transformational capability. Deacetylates FOXO3 in response to oxidative stress thereby increasing its ability to induce cell cycle arrest and resistance to oxidative stress but inhibiting FOXO3-mediated induction of apoptosis transcriptional activity; also leading to FOXO3 ubiquitination and protesomal degradation. Appears to have a similar effect on MLLT7/FOXO4 in regulation of transcriptional activity and apoptosis. Deacetylates DNMT1; thereby impairs DNMT1 methyltransferase-independent transcription repressor activity, modulates DNMT1 cell cycle regulatory function and DNMT1-mediated gene silencing. Deacetylates RELA/NF-kappa-B p65 thereby inhibiting its transactivating potential and augments apoptosis in response to TNF-alpha. Deacetylates HIF1A, KAT5/TIP60, RB1 and HIC1. Deacetylates FOXO1 resulting in its nuclear retention and enhancement of its transcriptional activity leading to increased gluconeogenesis in liver. Inhibits E2F1 transcriptional activity and apoptotic function, possibly by deacetylation. Involved in HES1- and HEY2-mediated transcriptional repression. In cooperation with MYCN seems to be involved in transcriptional repression of DUSP6/MAPK3 leading to MYCN stabilization by phosphorylation at 'Ser-62'. Deacetylates MEF2D. Required for antagonist-mediated transcription suppression of AR-dependent genes which may be linked to local deacetylation of histone H3. Represses HNF1A-mediated transcription. Required for the repression of ESRRG by CREBZF. Deacetylates NR1H3 AND NR1H2 and deacetylation of NR1H3 at 'Lys-434' positively regulates transcription of NR1H3:RXR target genes, promotes NR1H3 proteasomal degradation and results in cholesterol efflux; a promoter clearing mechanism after reach round of transcription is proposed. Involved in lipid metabolism: deacetylates LPIN1, thereby inhibiting diacylglycerol synthesis. Implicated in regulation of adipogenesis and fat mobilization in white adipocytes by repression of PPARG which probably involves association with NCOR1 and SMRT/NCOR2. Deacetylates p300/EP300 and PRMT1. Deacetylates ACSS2 leading to its activation, and HMGCS1 deacetylation. Involved in liver and muscle metabolism. Through deacetylation and activation of PPARGC1A is required to activate fatty acid oxidation in skeletal muscle under low-glucose conditions and is involved in glucose homeostasis. Involved in regulation of PPARA and fatty acid beta-oxidation in liver. Involved in positive regulation of insulin secretion in pancreatic beta cells in response to glucose; the function seems to imply transcriptional repression of UCP2. Proposed to deacetylate IRS2 thereby facilitating its insulin-induced tyrosine phosphorylation. Deacetylates SREBF1 isoform SREBP-1C thereby decreasing its stability and transactivation in lipogenic gene expression. Involved in DNA damage response by repressing genes which are involved in DNA repair, such as XPC and TP73, deacetylating XRCC6/Ku70, and facilitating recruitment of additional factors to sites of damaged DNA, such as SIRT1-deacetylated NBN can recruit ATM to initiate DNA repair and SIRT1-deacetylated XPA interacts with RPA2. Also involved in DNA repair of DNA double-strand breaks by homologous recombination and specifically single-strand annealing independently of XRCC6/Ku70 and NBN. Promotes DNA double-strand breaks by mediating deacetylation of SIRT6. Transcriptional suppression of XPC probably involves an E2F4:RBL2 suppressor complex and protein kinase B (AKT) signaling. Transcriptional suppression of TP73 probably involves E2F4 and PCAF. Deacetylates WRN thereby regulating its helicase and exonuclease activities and regulates WRN nuclear translocation in response to DNA damage. Deacetylates APEX1 at 'Lys-6' and 'Lys-7' and stimulates cellular AP endonuclease activity by promoting the association of APEX1 to XRCC1. Catalyzes deacetylation of ERCC4/XPF, thereby impairing interaction with ERCC1 and nucleotide excision repair (NER). Increases p53/TP53-mediated transcription-independent apoptosis by blocking nuclear translocation of cytoplasmic p53/TP53 and probably redirecting it to mitochondria. Deacetylates XRCC6/Ku70 at 'Lys-539' and 'Lys-542' causing it to sequester BAX away from mitochondria thereby inhibiting stress-induced apoptosis. Is involved in autophagy, presumably by deacetylating ATG5, ATG7 and MAP1LC3B/ATG8. Deacetylates AKT1 which leads to enhanced binding of AKT1 and PDK1 to PIP3 and promotes their activation. Proposed to play role in regulation of STK11/LBK1-dependent AMPK signaling pathways implicated in cellular senescence which seems to involve the regulation of the acetylation status of STK11/LBK1. Can deacetylate STK11/LBK1 and thereby increase its activity, cytoplasmic localization and association with STRAD; however, the relevance of such activity in normal cells is unclear. In endothelial cells is shown to inhibit STK11/LBK1 activity and to promote its degradation. Deacetylates SMAD7 at 'Lys-64' and 'Lys-70' thereby promoting its degradation. Deacetylates CIITA and augments its MHC class II transactivation and contributes to its stability. Deacetylates MECOM/EVI1. Deacetylates PML at 'Lys-487' and this deacetylation promotes PML control of PER2 nuclear localization. During the neurogenic transition, represses selective NOTCH1-target genes through histone deacetylation in a BCL6-dependent manner and leading to neuronal differentiation. Regulates the circadian expression of several core clock genes, including BMAL1, RORC, PER2 and CRY1 and plays a critical role in maintaining a controlled rhythmicity in histone acetylation, thereby contributing to circadian chromatin remodeling. Deacetylates BMAL1 and histones at the circadian gene promoters in order to facilitate repression by inhibitory components of the circadian oscillator. Deacetylates PER2, facilitating its ubiquitination and degradation by the proteasome. Protects cardiomyocytes against palmitate-induced apoptosis. Deacetylates XBP1 isoform 2; deacetylation decreases protein stability of XBP1 isoform 2 and inhibits its transcriptional activity. Deacetylates PCK1 and directs its activity toward phosphoenolpyruvate production promoting gluconeogenesis. Involved in the CCAR2-mediated regulation of PCK1 and NR1D1. Deacetylates CTNB1 at 'Lys-49'. In POMC (pro-opiomelanocortin) neurons, required for leptin-induced activation of PI3K signaling. In addition to protein deacetylase activity, also acts as a protein-lysine deacylase by mediating protein depropionylation and decrotonylation. Mediates depropionylation of Osterix (SP7). Catalyzes decrotonylation of histones; it however does not represent a major histone decrotonylase. Deacetylates SOX9; promoting SOX9 nuclear localization and transactivation activity. Involved in the regulation of centrosome duplication. Deacetylates CENATAC in G1 phase, allowing for SASS6 accumulation on the centrosome and subsequent procentriole assembly (By similarity). Deacetylates NDC80/HEC1 (By similarity).</text>
</comment>
<comment type="catalytic activity">
    <reaction evidence="4 5">
        <text>N(6)-acetyl-L-lysyl-[protein] + NAD(+) + H2O = 2''-O-acetyl-ADP-D-ribose + nicotinamide + L-lysyl-[protein]</text>
        <dbReference type="Rhea" id="RHEA:43636"/>
        <dbReference type="Rhea" id="RHEA-COMP:9752"/>
        <dbReference type="Rhea" id="RHEA-COMP:10731"/>
        <dbReference type="ChEBI" id="CHEBI:15377"/>
        <dbReference type="ChEBI" id="CHEBI:17154"/>
        <dbReference type="ChEBI" id="CHEBI:29969"/>
        <dbReference type="ChEBI" id="CHEBI:57540"/>
        <dbReference type="ChEBI" id="CHEBI:61930"/>
        <dbReference type="ChEBI" id="CHEBI:83767"/>
        <dbReference type="EC" id="2.3.1.286"/>
    </reaction>
</comment>
<comment type="catalytic activity">
    <reaction evidence="3">
        <text>N(6)-propanoyl-L-lysyl-[protein] + NAD(+) + H2O = 3''-O-propanoyl-ADP-D-ribose + nicotinamide + L-lysyl-[protein]</text>
        <dbReference type="Rhea" id="RHEA:23500"/>
        <dbReference type="Rhea" id="RHEA-COMP:9752"/>
        <dbReference type="Rhea" id="RHEA-COMP:13758"/>
        <dbReference type="ChEBI" id="CHEBI:15377"/>
        <dbReference type="ChEBI" id="CHEBI:17154"/>
        <dbReference type="ChEBI" id="CHEBI:29969"/>
        <dbReference type="ChEBI" id="CHEBI:57540"/>
        <dbReference type="ChEBI" id="CHEBI:138019"/>
        <dbReference type="ChEBI" id="CHEBI:145015"/>
    </reaction>
    <physiologicalReaction direction="left-to-right" evidence="3">
        <dbReference type="Rhea" id="RHEA:23501"/>
    </physiologicalReaction>
</comment>
<comment type="catalytic activity">
    <reaction evidence="4">
        <text>N(6)-(2E)-butenoyl-L-lysyl-[protein] + NAD(+) + H2O = 2''-O-(2E)-but-2-enoyl-ADP-D-ribose + nicotinamide + L-lysyl-[protein]</text>
        <dbReference type="Rhea" id="RHEA:69332"/>
        <dbReference type="Rhea" id="RHEA-COMP:9752"/>
        <dbReference type="Rhea" id="RHEA-COMP:13707"/>
        <dbReference type="ChEBI" id="CHEBI:15377"/>
        <dbReference type="ChEBI" id="CHEBI:17154"/>
        <dbReference type="ChEBI" id="CHEBI:29969"/>
        <dbReference type="ChEBI" id="CHEBI:57540"/>
        <dbReference type="ChEBI" id="CHEBI:137954"/>
        <dbReference type="ChEBI" id="CHEBI:183235"/>
    </reaction>
    <physiologicalReaction direction="left-to-right" evidence="4">
        <dbReference type="Rhea" id="RHEA:69333"/>
    </physiologicalReaction>
</comment>
<comment type="cofactor">
    <cofactor evidence="2">
        <name>Zn(2+)</name>
        <dbReference type="ChEBI" id="CHEBI:29105"/>
    </cofactor>
    <text evidence="2">Binds 1 zinc ion per subunit.</text>
</comment>
<comment type="activity regulation">
    <text evidence="4">Inhibited by nicotinamide. Activated by resveratrol (3,5,4'-trihydroxy-trans-stilbene), butein (3,4,2',4'-tetrahydroxychalcone), piceatannol (3,5,3',4'-tetrahydroxy-trans-stilbene), Isoliquiritigenin (4,2',4'-trihydroxychalcone), fisetin (3,7,3',4'-tetrahydroxyflavone) and quercetin (3,5,7,3',4'-pentahydroxyflavone). MAPK8/JNK1 and RPS19BP1/AROS act as positive regulators of deacetylation activity. Negatively regulated by CCAR2.</text>
</comment>
<comment type="subunit">
    <text evidence="3 4">Interacts with XBP1 isoform 2 (By similarity). Found in a complex with PCAF and MYOD1. Interacts with FOXO1; the interaction deacetylates FOXO1, resulting in its nuclear retention and promotion of its transcriptional activity Component of the eNoSC complex, composed of SIRT1, SUV39H1 and RRP8. Interacts with HES1, HEY2 and PML. Interacts with RPS19BP1/AROS. Interacts with CCAR2 (via N-terminus); the interaction disrupts the interaction between SIRT1 and p53/TP53. Interacts with SETD7; the interaction induces the dissociation of SIRT1 from p53/TP53 and increases p53/TP53 activity. Interacts with MYCN, NR1I2, CREBZF, TSC2, TLE1, FOS, JUN, NR0B2, PPARG, NCOR, IRS1, IRS2 and NMNAT1. Interacts with HNF1A; the interaction occurs under nutrient restriction. Interacts with SUZ12; the interaction mediates the association with the PRC4 histone methylation complex which is specific as an association with PCR2 and PCR3 complex variants is not found. Interacts with HIV-1 tat. Interacts with BCL6; leads to a epigenetic repression of specific target genes. Interacts with CLOCK, BMAL1 and PER2 (By similarity). Interacts with PPARA; the interaction seems to be modulated by NAD(+) levels. Interacts with NR1H3 and this interaction is inhibited in the presence of CCAR2. Interacts with CHEK2. Interacts with p53/TP53. Exhibits a preferential interaction with sumoylated CCAR2 over its unmodified form (By similarity). Interacts with PACS2 (By similarity). Interacts with SIRT7 (By similarity). Interacts with PUS7 (By similarity). Interacts with TULP3 (By similarity). Interacts with MORN3; the interaction enhances the ubiquitination of p53/TP53 (By similarity).</text>
</comment>
<comment type="subcellular location">
    <subcellularLocation>
        <location evidence="4">Nucleus</location>
        <location evidence="4">PML body</location>
    </subcellularLocation>
    <subcellularLocation>
        <location evidence="4">Cytoplasm</location>
    </subcellularLocation>
    <subcellularLocation>
        <location evidence="4">Nucleus</location>
    </subcellularLocation>
    <text evidence="3 4">Recruited to the nuclear bodies via its interaction with PML. Colocalized with APEX1 in the nucleus. May be found in nucleolus, nuclear euchromatin, heterochromatin and inner membrane (By similarity). Shuttles between nucleus and cytoplasm (By similarity). Colocalizes in the nucleus with XBP1 isoform 2 (By similarity).</text>
</comment>
<comment type="PTM">
    <text evidence="4">Methylated on multiple lysine residues; methylation is enhanced after DNA damage and is dispensable for deacetylase activity toward p53/TP53.</text>
</comment>
<comment type="PTM">
    <text evidence="3 4">Phosphorylated. Phosphorylated by STK4/MST1, resulting in inhibition of SIRT1-mediated p53/TP53 deacetylation. Phosphorylation by MAPK8/JNK1 at Thr-338 leads to increased nuclear localization and enzymatic activity. Phosphorylation at Thr-338 by DYRK1A and DYRK3 activates deacetylase activity and promotes cell survival. Phosphorylated by CaMK2, leading to increased p53/TP53 and NF-kappa-B p65/RELA deacetylation activity (By similarity).</text>
</comment>
<comment type="PTM">
    <text evidence="3">S-nitrosylated by GAPDH, leading to inhibit the NAD-dependent protein deacetylase activity.</text>
</comment>
<comment type="PTM">
    <text evidence="3">Acetylated at various Lys residues. Deacetylated via an autocatalytic mechanism. Autodeacetylation at Lys-46 promotes its protein deacetylase activity.</text>
</comment>
<comment type="PTM">
    <text evidence="4">Ubiquitinated; leading to degradation. Deubiquitinated by USP22; leading to stabilization.</text>
</comment>
<comment type="miscellaneous">
    <text evidence="4">Red wine, which contains resveratrol, may participate in activation of sirtuin proteins, and may therefore contribute to an extended lifespan as has been observed in yeast.</text>
</comment>
<comment type="miscellaneous">
    <text evidence="4">Calf histone H1 is used as substrate in the in vitro deacetylation assay. As, in vivo, interaction occurs between SIRT1 with H1-4, deacetylation has been validated only for H1-4.</text>
</comment>
<comment type="miscellaneous">
    <text evidence="4">The reported ADP-ribosyltransferase activity of sirtuins is likely to be an inefficient side reaction of the deacetylase activity and may not be physiologically relevant.</text>
</comment>
<comment type="similarity">
    <text evidence="7">Belongs to the sirtuin family. Class I subfamily.</text>
</comment>
<evidence type="ECO:0000250" key="1"/>
<evidence type="ECO:0000250" key="2">
    <source>
        <dbReference type="UniProtKB" id="Q8IXJ6"/>
    </source>
</evidence>
<evidence type="ECO:0000250" key="3">
    <source>
        <dbReference type="UniProtKB" id="Q923E4"/>
    </source>
</evidence>
<evidence type="ECO:0000250" key="4">
    <source>
        <dbReference type="UniProtKB" id="Q96EB6"/>
    </source>
</evidence>
<evidence type="ECO:0000255" key="5">
    <source>
        <dbReference type="PROSITE-ProRule" id="PRU00236"/>
    </source>
</evidence>
<evidence type="ECO:0000256" key="6">
    <source>
        <dbReference type="SAM" id="MobiDB-lite"/>
    </source>
</evidence>
<evidence type="ECO:0000305" key="7"/>
<evidence type="ECO:0000312" key="8">
    <source>
        <dbReference type="RGD" id="1308542"/>
    </source>
</evidence>
<organism>
    <name type="scientific">Rattus norvegicus</name>
    <name type="common">Rat</name>
    <dbReference type="NCBI Taxonomy" id="10116"/>
    <lineage>
        <taxon>Eukaryota</taxon>
        <taxon>Metazoa</taxon>
        <taxon>Chordata</taxon>
        <taxon>Craniata</taxon>
        <taxon>Vertebrata</taxon>
        <taxon>Euteleostomi</taxon>
        <taxon>Mammalia</taxon>
        <taxon>Eutheria</taxon>
        <taxon>Euarchontoglires</taxon>
        <taxon>Glires</taxon>
        <taxon>Rodentia</taxon>
        <taxon>Myomorpha</taxon>
        <taxon>Muroidea</taxon>
        <taxon>Muridae</taxon>
        <taxon>Murinae</taxon>
        <taxon>Rattus</taxon>
    </lineage>
</organism>
<name>SIR1_RAT</name>
<dbReference type="EC" id="2.3.1.286" evidence="4 5"/>
<dbReference type="EC" id="2.3.1.-" evidence="3"/>
<dbReference type="EMBL" id="AABR07044925">
    <property type="status" value="NOT_ANNOTATED_CDS"/>
    <property type="molecule type" value="Genomic_DNA"/>
</dbReference>
<dbReference type="SMR" id="A0A0G2JZ79"/>
<dbReference type="FunCoup" id="A0A0G2JZ79">
    <property type="interactions" value="610"/>
</dbReference>
<dbReference type="IntAct" id="A0A0G2JZ79">
    <property type="interactions" value="1"/>
</dbReference>
<dbReference type="MINT" id="A0A0G2JZ79"/>
<dbReference type="STRING" id="10116.ENSRNOP00000070943"/>
<dbReference type="GlyGen" id="A0A0G2JZ79">
    <property type="glycosylation" value="1 site, 1 O-linked glycan (1 site)"/>
</dbReference>
<dbReference type="PaxDb" id="10116-ENSRNOP00000000427"/>
<dbReference type="AGR" id="RGD:1308542"/>
<dbReference type="RGD" id="1308542">
    <property type="gene designation" value="Sirt1"/>
</dbReference>
<dbReference type="eggNOG" id="KOG2684">
    <property type="taxonomic scope" value="Eukaryota"/>
</dbReference>
<dbReference type="InParanoid" id="A0A0G2JZ79"/>
<dbReference type="Reactome" id="R-RNO-3371453">
    <property type="pathway name" value="Regulation of HSF1-mediated heat shock response"/>
</dbReference>
<dbReference type="Reactome" id="R-RNO-427359">
    <property type="pathway name" value="SIRT1 negatively regulates rRNA expression"/>
</dbReference>
<dbReference type="Reactome" id="R-RNO-9617629">
    <property type="pathway name" value="Regulation of FOXO transcriptional activity by acetylation"/>
</dbReference>
<dbReference type="Reactome" id="R-RNO-9841922">
    <property type="pathway name" value="MLL4 and MLL3 complexes regulate expression of PPARG target genes in adipogenesis and hepatic steatosis"/>
</dbReference>
<dbReference type="Reactome" id="R-RNO-9856649">
    <property type="pathway name" value="Transcriptional and post-translational regulation of MITF-M expression and activity"/>
</dbReference>
<dbReference type="PRO" id="PR:A0A0G2JZ79"/>
<dbReference type="Proteomes" id="UP000002494">
    <property type="component" value="Unplaced"/>
</dbReference>
<dbReference type="GO" id="GO:0030424">
    <property type="term" value="C:axon"/>
    <property type="evidence" value="ECO:0000314"/>
    <property type="project" value="RGD"/>
</dbReference>
<dbReference type="GO" id="GO:0000785">
    <property type="term" value="C:chromatin"/>
    <property type="evidence" value="ECO:0000266"/>
    <property type="project" value="RGD"/>
</dbReference>
<dbReference type="GO" id="GO:0005677">
    <property type="term" value="C:chromatin silencing complex"/>
    <property type="evidence" value="ECO:0000266"/>
    <property type="project" value="RGD"/>
</dbReference>
<dbReference type="GO" id="GO:0005737">
    <property type="term" value="C:cytoplasm"/>
    <property type="evidence" value="ECO:0000266"/>
    <property type="project" value="RGD"/>
</dbReference>
<dbReference type="GO" id="GO:0005829">
    <property type="term" value="C:cytosol"/>
    <property type="evidence" value="ECO:0000266"/>
    <property type="project" value="RGD"/>
</dbReference>
<dbReference type="GO" id="GO:0061773">
    <property type="term" value="C:eNoSc complex"/>
    <property type="evidence" value="ECO:0000266"/>
    <property type="project" value="RGD"/>
</dbReference>
<dbReference type="GO" id="GO:0035098">
    <property type="term" value="C:ESC/E(Z) complex"/>
    <property type="evidence" value="ECO:0000266"/>
    <property type="project" value="RGD"/>
</dbReference>
<dbReference type="GO" id="GO:0000791">
    <property type="term" value="C:euchromatin"/>
    <property type="evidence" value="ECO:0000266"/>
    <property type="project" value="RGD"/>
</dbReference>
<dbReference type="GO" id="GO:0030426">
    <property type="term" value="C:growth cone"/>
    <property type="evidence" value="ECO:0000314"/>
    <property type="project" value="RGD"/>
</dbReference>
<dbReference type="GO" id="GO:0000792">
    <property type="term" value="C:heterochromatin"/>
    <property type="evidence" value="ECO:0000266"/>
    <property type="project" value="RGD"/>
</dbReference>
<dbReference type="GO" id="GO:0005739">
    <property type="term" value="C:mitochondrion"/>
    <property type="evidence" value="ECO:0000266"/>
    <property type="project" value="RGD"/>
</dbReference>
<dbReference type="GO" id="GO:0005635">
    <property type="term" value="C:nuclear envelope"/>
    <property type="evidence" value="ECO:0000266"/>
    <property type="project" value="RGD"/>
</dbReference>
<dbReference type="GO" id="GO:0005637">
    <property type="term" value="C:nuclear inner membrane"/>
    <property type="evidence" value="ECO:0000266"/>
    <property type="project" value="RGD"/>
</dbReference>
<dbReference type="GO" id="GO:0005730">
    <property type="term" value="C:nucleolus"/>
    <property type="evidence" value="ECO:0000266"/>
    <property type="project" value="RGD"/>
</dbReference>
<dbReference type="GO" id="GO:0005654">
    <property type="term" value="C:nucleoplasm"/>
    <property type="evidence" value="ECO:0000266"/>
    <property type="project" value="RGD"/>
</dbReference>
<dbReference type="GO" id="GO:0005634">
    <property type="term" value="C:nucleus"/>
    <property type="evidence" value="ECO:0000314"/>
    <property type="project" value="RGD"/>
</dbReference>
<dbReference type="GO" id="GO:0016605">
    <property type="term" value="C:PML body"/>
    <property type="evidence" value="ECO:0000266"/>
    <property type="project" value="RGD"/>
</dbReference>
<dbReference type="GO" id="GO:0032991">
    <property type="term" value="C:protein-containing complex"/>
    <property type="evidence" value="ECO:0000266"/>
    <property type="project" value="RGD"/>
</dbReference>
<dbReference type="GO" id="GO:0033553">
    <property type="term" value="C:rDNA heterochromatin"/>
    <property type="evidence" value="ECO:0000266"/>
    <property type="project" value="RGD"/>
</dbReference>
<dbReference type="GO" id="GO:0043425">
    <property type="term" value="F:bHLH transcription factor binding"/>
    <property type="evidence" value="ECO:0000266"/>
    <property type="project" value="RGD"/>
</dbReference>
<dbReference type="GO" id="GO:0089720">
    <property type="term" value="F:caspase binding"/>
    <property type="evidence" value="ECO:0000266"/>
    <property type="project" value="RGD"/>
</dbReference>
<dbReference type="GO" id="GO:0019213">
    <property type="term" value="F:deacetylase activity"/>
    <property type="evidence" value="ECO:0000266"/>
    <property type="project" value="RGD"/>
</dbReference>
<dbReference type="GO" id="GO:0140297">
    <property type="term" value="F:DNA-binding transcription factor binding"/>
    <property type="evidence" value="ECO:0000266"/>
    <property type="project" value="RGD"/>
</dbReference>
<dbReference type="GO" id="GO:0008047">
    <property type="term" value="F:enzyme activator activity"/>
    <property type="evidence" value="ECO:0000266"/>
    <property type="project" value="RGD"/>
</dbReference>
<dbReference type="GO" id="GO:0019899">
    <property type="term" value="F:enzyme binding"/>
    <property type="evidence" value="ECO:0000353"/>
    <property type="project" value="BHF-UCL"/>
</dbReference>
<dbReference type="GO" id="GO:0042393">
    <property type="term" value="F:histone binding"/>
    <property type="evidence" value="ECO:0000266"/>
    <property type="project" value="RGD"/>
</dbReference>
<dbReference type="GO" id="GO:0004407">
    <property type="term" value="F:histone deacetylase activity"/>
    <property type="evidence" value="ECO:0000266"/>
    <property type="project" value="RGD"/>
</dbReference>
<dbReference type="GO" id="GO:0017136">
    <property type="term" value="F:histone deacetylase activity, NAD-dependent"/>
    <property type="evidence" value="ECO:0000314"/>
    <property type="project" value="RGD"/>
</dbReference>
<dbReference type="GO" id="GO:0141050">
    <property type="term" value="F:histone H3K deacetylase activity"/>
    <property type="evidence" value="ECO:0000266"/>
    <property type="project" value="RGD"/>
</dbReference>
<dbReference type="GO" id="GO:0032041">
    <property type="term" value="F:histone H3K14 deacetylase activity, NAD-dependent"/>
    <property type="evidence" value="ECO:0000266"/>
    <property type="project" value="RGD"/>
</dbReference>
<dbReference type="GO" id="GO:0046969">
    <property type="term" value="F:histone H3K9 deacetylase activity, NAD-dependent"/>
    <property type="evidence" value="ECO:0000266"/>
    <property type="project" value="RGD"/>
</dbReference>
<dbReference type="GO" id="GO:0140937">
    <property type="term" value="F:histone H4K12 deacetylase activity, hydrolytic mechanism"/>
    <property type="evidence" value="ECO:0000266"/>
    <property type="project" value="RGD"/>
</dbReference>
<dbReference type="GO" id="GO:0046970">
    <property type="term" value="F:histone H4K16 deacetylase activity, NAD-dependent"/>
    <property type="evidence" value="ECO:0000266"/>
    <property type="project" value="RGD"/>
</dbReference>
<dbReference type="GO" id="GO:0043398">
    <property type="term" value="F:HLH domain binding"/>
    <property type="evidence" value="ECO:0000266"/>
    <property type="project" value="RGD"/>
</dbReference>
<dbReference type="GO" id="GO:0042802">
    <property type="term" value="F:identical protein binding"/>
    <property type="evidence" value="ECO:0000266"/>
    <property type="project" value="RGD"/>
</dbReference>
<dbReference type="GO" id="GO:1990254">
    <property type="term" value="F:keratin filament binding"/>
    <property type="evidence" value="ECO:0000266"/>
    <property type="project" value="RGD"/>
</dbReference>
<dbReference type="GO" id="GO:0046872">
    <property type="term" value="F:metal ion binding"/>
    <property type="evidence" value="ECO:0007669"/>
    <property type="project" value="UniProtKB-KW"/>
</dbReference>
<dbReference type="GO" id="GO:0051019">
    <property type="term" value="F:mitogen-activated protein kinase binding"/>
    <property type="evidence" value="ECO:0000266"/>
    <property type="project" value="RGD"/>
</dbReference>
<dbReference type="GO" id="GO:0070403">
    <property type="term" value="F:NAD+ binding"/>
    <property type="evidence" value="ECO:0000318"/>
    <property type="project" value="GO_Central"/>
</dbReference>
<dbReference type="GO" id="GO:0160012">
    <property type="term" value="F:NAD-dependent histone decrotonylase activity"/>
    <property type="evidence" value="ECO:0000250"/>
    <property type="project" value="UniProtKB"/>
</dbReference>
<dbReference type="GO" id="GO:0034979">
    <property type="term" value="F:NAD-dependent protein lysine deacetylase activity"/>
    <property type="evidence" value="ECO:0000266"/>
    <property type="project" value="RGD"/>
</dbReference>
<dbReference type="GO" id="GO:0141208">
    <property type="term" value="F:NAD-dependent protein lysine delactylase activity"/>
    <property type="evidence" value="ECO:0000266"/>
    <property type="project" value="RGD"/>
</dbReference>
<dbReference type="GO" id="GO:0106231">
    <property type="term" value="F:NAD-dependent protein-lysine depropionylase activity"/>
    <property type="evidence" value="ECO:0000250"/>
    <property type="project" value="UniProtKB"/>
</dbReference>
<dbReference type="GO" id="GO:0016922">
    <property type="term" value="F:nuclear receptor binding"/>
    <property type="evidence" value="ECO:0000266"/>
    <property type="project" value="RGD"/>
</dbReference>
<dbReference type="GO" id="GO:0002039">
    <property type="term" value="F:p53 binding"/>
    <property type="evidence" value="ECO:0000266"/>
    <property type="project" value="RGD"/>
</dbReference>
<dbReference type="GO" id="GO:1990841">
    <property type="term" value="F:promoter-specific chromatin binding"/>
    <property type="evidence" value="ECO:0000266"/>
    <property type="project" value="RGD"/>
</dbReference>
<dbReference type="GO" id="GO:0019904">
    <property type="term" value="F:protein domain specific binding"/>
    <property type="evidence" value="ECO:0000266"/>
    <property type="project" value="RGD"/>
</dbReference>
<dbReference type="GO" id="GO:0043422">
    <property type="term" value="F:protein kinase B binding"/>
    <property type="evidence" value="ECO:0000314"/>
    <property type="project" value="RGD"/>
</dbReference>
<dbReference type="GO" id="GO:0033558">
    <property type="term" value="F:protein lysine deacetylase activity"/>
    <property type="evidence" value="ECO:0000266"/>
    <property type="project" value="RGD"/>
</dbReference>
<dbReference type="GO" id="GO:0000978">
    <property type="term" value="F:RNA polymerase II cis-regulatory region sequence-specific DNA binding"/>
    <property type="evidence" value="ECO:0000266"/>
    <property type="project" value="RGD"/>
</dbReference>
<dbReference type="GO" id="GO:0003713">
    <property type="term" value="F:transcription coactivator activity"/>
    <property type="evidence" value="ECO:0000266"/>
    <property type="project" value="RGD"/>
</dbReference>
<dbReference type="GO" id="GO:0003714">
    <property type="term" value="F:transcription corepressor activity"/>
    <property type="evidence" value="ECO:0000266"/>
    <property type="project" value="RGD"/>
</dbReference>
<dbReference type="GO" id="GO:0001525">
    <property type="term" value="P:angiogenesis"/>
    <property type="evidence" value="ECO:0000266"/>
    <property type="project" value="RGD"/>
</dbReference>
<dbReference type="GO" id="GO:0042595">
    <property type="term" value="P:behavioral response to starvation"/>
    <property type="evidence" value="ECO:0000266"/>
    <property type="project" value="RGD"/>
</dbReference>
<dbReference type="GO" id="GO:0010659">
    <property type="term" value="P:cardiac muscle cell apoptotic process"/>
    <property type="evidence" value="ECO:0000315"/>
    <property type="project" value="RGD"/>
</dbReference>
<dbReference type="GO" id="GO:1904646">
    <property type="term" value="P:cellular response to amyloid-beta"/>
    <property type="evidence" value="ECO:0000315"/>
    <property type="project" value="ARUK-UCL"/>
</dbReference>
<dbReference type="GO" id="GO:0071236">
    <property type="term" value="P:cellular response to antibiotic"/>
    <property type="evidence" value="ECO:0000270"/>
    <property type="project" value="RGD"/>
</dbReference>
<dbReference type="GO" id="GO:1904644">
    <property type="term" value="P:cellular response to curcumin"/>
    <property type="evidence" value="ECO:0000270"/>
    <property type="project" value="RGD"/>
</dbReference>
<dbReference type="GO" id="GO:0042149">
    <property type="term" value="P:cellular response to glucose starvation"/>
    <property type="evidence" value="ECO:0000266"/>
    <property type="project" value="RGD"/>
</dbReference>
<dbReference type="GO" id="GO:0070301">
    <property type="term" value="P:cellular response to hydrogen peroxide"/>
    <property type="evidence" value="ECO:0000270"/>
    <property type="project" value="RGD"/>
</dbReference>
<dbReference type="GO" id="GO:0071456">
    <property type="term" value="P:cellular response to hypoxia"/>
    <property type="evidence" value="ECO:0000266"/>
    <property type="project" value="RGD"/>
</dbReference>
<dbReference type="GO" id="GO:0071479">
    <property type="term" value="P:cellular response to ionizing radiation"/>
    <property type="evidence" value="ECO:0000266"/>
    <property type="project" value="RGD"/>
</dbReference>
<dbReference type="GO" id="GO:1990830">
    <property type="term" value="P:cellular response to leukemia inhibitory factor"/>
    <property type="evidence" value="ECO:0000266"/>
    <property type="project" value="RGD"/>
</dbReference>
<dbReference type="GO" id="GO:1904639">
    <property type="term" value="P:cellular response to resveratrol"/>
    <property type="evidence" value="ECO:0000315"/>
    <property type="project" value="RGD"/>
</dbReference>
<dbReference type="GO" id="GO:1904648">
    <property type="term" value="P:cellular response to rotenone"/>
    <property type="evidence" value="ECO:0000270"/>
    <property type="project" value="RGD"/>
</dbReference>
<dbReference type="GO" id="GO:0009267">
    <property type="term" value="P:cellular response to starvation"/>
    <property type="evidence" value="ECO:0000266"/>
    <property type="project" value="RGD"/>
</dbReference>
<dbReference type="GO" id="GO:0071356">
    <property type="term" value="P:cellular response to tumor necrosis factor"/>
    <property type="evidence" value="ECO:0000266"/>
    <property type="project" value="RGD"/>
</dbReference>
<dbReference type="GO" id="GO:0071303">
    <property type="term" value="P:cellular response to vitamin B3"/>
    <property type="evidence" value="ECO:0000270"/>
    <property type="project" value="RGD"/>
</dbReference>
<dbReference type="GO" id="GO:0042632">
    <property type="term" value="P:cholesterol homeostasis"/>
    <property type="evidence" value="ECO:0000266"/>
    <property type="project" value="RGD"/>
</dbReference>
<dbReference type="GO" id="GO:0006325">
    <property type="term" value="P:chromatin organization"/>
    <property type="evidence" value="ECO:0000266"/>
    <property type="project" value="RGD"/>
</dbReference>
<dbReference type="GO" id="GO:0032922">
    <property type="term" value="P:circadian regulation of gene expression"/>
    <property type="evidence" value="ECO:0000266"/>
    <property type="project" value="RGD"/>
</dbReference>
<dbReference type="GO" id="GO:0007623">
    <property type="term" value="P:circadian rhythm"/>
    <property type="evidence" value="ECO:0000266"/>
    <property type="project" value="RGD"/>
</dbReference>
<dbReference type="GO" id="GO:0006974">
    <property type="term" value="P:DNA damage response"/>
    <property type="evidence" value="ECO:0000266"/>
    <property type="project" value="RGD"/>
</dbReference>
<dbReference type="GO" id="GO:0140861">
    <property type="term" value="P:DNA repair-dependent chromatin remodeling"/>
    <property type="evidence" value="ECO:0000266"/>
    <property type="project" value="RGD"/>
</dbReference>
<dbReference type="GO" id="GO:0000731">
    <property type="term" value="P:DNA synthesis involved in DNA repair"/>
    <property type="evidence" value="ECO:0000266"/>
    <property type="project" value="RGD"/>
</dbReference>
<dbReference type="GO" id="GO:0097009">
    <property type="term" value="P:energy homeostasis"/>
    <property type="evidence" value="ECO:0000266"/>
    <property type="project" value="RGD"/>
</dbReference>
<dbReference type="GO" id="GO:0055089">
    <property type="term" value="P:fatty acid homeostasis"/>
    <property type="evidence" value="ECO:0000266"/>
    <property type="project" value="RGD"/>
</dbReference>
<dbReference type="GO" id="GO:0031507">
    <property type="term" value="P:heterochromatin formation"/>
    <property type="evidence" value="ECO:0000266"/>
    <property type="project" value="RGD"/>
</dbReference>
<dbReference type="GO" id="GO:0001678">
    <property type="term" value="P:intracellular glucose homeostasis"/>
    <property type="evidence" value="ECO:0000266"/>
    <property type="project" value="RGD"/>
</dbReference>
<dbReference type="GO" id="GO:0035356">
    <property type="term" value="P:intracellular triglyceride homeostasis"/>
    <property type="evidence" value="ECO:0000266"/>
    <property type="project" value="RGD"/>
</dbReference>
<dbReference type="GO" id="GO:0097193">
    <property type="term" value="P:intrinsic apoptotic signaling pathway"/>
    <property type="evidence" value="ECO:0000266"/>
    <property type="project" value="RGD"/>
</dbReference>
<dbReference type="GO" id="GO:0008630">
    <property type="term" value="P:intrinsic apoptotic signaling pathway in response to DNA damage"/>
    <property type="evidence" value="ECO:0000266"/>
    <property type="project" value="RGD"/>
</dbReference>
<dbReference type="GO" id="GO:0042771">
    <property type="term" value="P:intrinsic apoptotic signaling pathway in response to DNA damage by p53 class mediator"/>
    <property type="evidence" value="ECO:0000266"/>
    <property type="project" value="RGD"/>
</dbReference>
<dbReference type="GO" id="GO:0033210">
    <property type="term" value="P:leptin-mediated signaling pathway"/>
    <property type="evidence" value="ECO:0000266"/>
    <property type="project" value="RGD"/>
</dbReference>
<dbReference type="GO" id="GO:0030225">
    <property type="term" value="P:macrophage differentiation"/>
    <property type="evidence" value="ECO:0000266"/>
    <property type="project" value="RGD"/>
</dbReference>
<dbReference type="GO" id="GO:0051658">
    <property type="term" value="P:maintenance of nucleus location"/>
    <property type="evidence" value="ECO:0000266"/>
    <property type="project" value="RGD"/>
</dbReference>
<dbReference type="GO" id="GO:0007005">
    <property type="term" value="P:mitochondrion organization"/>
    <property type="evidence" value="ECO:0000266"/>
    <property type="project" value="RGD"/>
</dbReference>
<dbReference type="GO" id="GO:0007517">
    <property type="term" value="P:muscle organ development"/>
    <property type="evidence" value="ECO:0007669"/>
    <property type="project" value="UniProtKB-KW"/>
</dbReference>
<dbReference type="GO" id="GO:1904178">
    <property type="term" value="P:negative regulation of adipose tissue development"/>
    <property type="evidence" value="ECO:0000266"/>
    <property type="project" value="RGD"/>
</dbReference>
<dbReference type="GO" id="GO:0060766">
    <property type="term" value="P:negative regulation of androgen receptor signaling pathway"/>
    <property type="evidence" value="ECO:0000266"/>
    <property type="project" value="RGD"/>
</dbReference>
<dbReference type="GO" id="GO:0043066">
    <property type="term" value="P:negative regulation of apoptotic process"/>
    <property type="evidence" value="ECO:0000266"/>
    <property type="project" value="RGD"/>
</dbReference>
<dbReference type="GO" id="GO:0043124">
    <property type="term" value="P:negative regulation of canonical NF-kappaB signal transduction"/>
    <property type="evidence" value="ECO:0000266"/>
    <property type="project" value="RGD"/>
</dbReference>
<dbReference type="GO" id="GO:0010667">
    <property type="term" value="P:negative regulation of cardiac muscle cell apoptotic process"/>
    <property type="evidence" value="ECO:0000315"/>
    <property type="project" value="RGD"/>
</dbReference>
<dbReference type="GO" id="GO:0045786">
    <property type="term" value="P:negative regulation of cell cycle"/>
    <property type="evidence" value="ECO:0000266"/>
    <property type="project" value="RGD"/>
</dbReference>
<dbReference type="GO" id="GO:2000655">
    <property type="term" value="P:negative regulation of cellular response to testosterone stimulus"/>
    <property type="evidence" value="ECO:0000266"/>
    <property type="project" value="RGD"/>
</dbReference>
<dbReference type="GO" id="GO:2000773">
    <property type="term" value="P:negative regulation of cellular senescence"/>
    <property type="evidence" value="ECO:0000266"/>
    <property type="project" value="RGD"/>
</dbReference>
<dbReference type="GO" id="GO:0043518">
    <property type="term" value="P:negative regulation of DNA damage response, signal transduction by p53 class mediator"/>
    <property type="evidence" value="ECO:0000266"/>
    <property type="project" value="RGD"/>
</dbReference>
<dbReference type="GO" id="GO:0045892">
    <property type="term" value="P:negative regulation of DNA-templated transcription"/>
    <property type="evidence" value="ECO:0000266"/>
    <property type="project" value="RGD"/>
</dbReference>
<dbReference type="GO" id="GO:0045599">
    <property type="term" value="P:negative regulation of fat cell differentiation"/>
    <property type="evidence" value="ECO:0000266"/>
    <property type="project" value="RGD"/>
</dbReference>
<dbReference type="GO" id="GO:2000270">
    <property type="term" value="P:negative regulation of fibroblast apoptotic process"/>
    <property type="evidence" value="ECO:0000315"/>
    <property type="project" value="RGD"/>
</dbReference>
<dbReference type="GO" id="GO:0010629">
    <property type="term" value="P:negative regulation of gene expression"/>
    <property type="evidence" value="ECO:0000266"/>
    <property type="project" value="RGD"/>
</dbReference>
<dbReference type="GO" id="GO:0060125">
    <property type="term" value="P:negative regulation of growth hormone secretion"/>
    <property type="evidence" value="ECO:0000315"/>
    <property type="project" value="RGD"/>
</dbReference>
<dbReference type="GO" id="GO:0035331">
    <property type="term" value="P:negative regulation of hippo signaling"/>
    <property type="evidence" value="ECO:0000266"/>
    <property type="project" value="RGD"/>
</dbReference>
<dbReference type="GO" id="GO:1902166">
    <property type="term" value="P:negative regulation of intrinsic apoptotic signaling pathway in response to DNA damage by p53 class mediator"/>
    <property type="evidence" value="ECO:0000266"/>
    <property type="project" value="RGD"/>
</dbReference>
<dbReference type="GO" id="GO:0043524">
    <property type="term" value="P:negative regulation of neuron apoptotic process"/>
    <property type="evidence" value="ECO:0000315"/>
    <property type="project" value="ARUK-UCL"/>
</dbReference>
<dbReference type="GO" id="GO:1902176">
    <property type="term" value="P:negative regulation of oxidative stress-induced intrinsic apoptotic signaling pathway"/>
    <property type="evidence" value="ECO:0000266"/>
    <property type="project" value="RGD"/>
</dbReference>
<dbReference type="GO" id="GO:0051898">
    <property type="term" value="P:negative regulation of phosphatidylinositol 3-kinase/protein kinase B signal transduction"/>
    <property type="evidence" value="ECO:0000266"/>
    <property type="project" value="RGD"/>
</dbReference>
<dbReference type="GO" id="GO:0031393">
    <property type="term" value="P:negative regulation of prostaglandin biosynthetic process"/>
    <property type="evidence" value="ECO:0000266"/>
    <property type="project" value="RGD"/>
</dbReference>
<dbReference type="GO" id="GO:1900181">
    <property type="term" value="P:negative regulation of protein localization to nucleus"/>
    <property type="evidence" value="ECO:0000315"/>
    <property type="project" value="RGD"/>
</dbReference>
<dbReference type="GO" id="GO:1903427">
    <property type="term" value="P:negative regulation of reactive oxygen species biosynthetic process"/>
    <property type="evidence" value="ECO:0000315"/>
    <property type="project" value="RGD"/>
</dbReference>
<dbReference type="GO" id="GO:1901797">
    <property type="term" value="P:negative regulation of signal transduction by p53 class mediator"/>
    <property type="evidence" value="ECO:0000266"/>
    <property type="project" value="RGD"/>
</dbReference>
<dbReference type="GO" id="GO:0032007">
    <property type="term" value="P:negative regulation of TOR signaling"/>
    <property type="evidence" value="ECO:0000266"/>
    <property type="project" value="RGD"/>
</dbReference>
<dbReference type="GO" id="GO:0000122">
    <property type="term" value="P:negative regulation of transcription by RNA polymerase II"/>
    <property type="evidence" value="ECO:0000266"/>
    <property type="project" value="RGD"/>
</dbReference>
<dbReference type="GO" id="GO:0030512">
    <property type="term" value="P:negative regulation of transforming growth factor beta receptor signaling pathway"/>
    <property type="evidence" value="ECO:0000266"/>
    <property type="project" value="RGD"/>
</dbReference>
<dbReference type="GO" id="GO:0010868">
    <property type="term" value="P:negative regulation of triglyceride biosynthetic process"/>
    <property type="evidence" value="ECO:0000266"/>
    <property type="project" value="RGD"/>
</dbReference>
<dbReference type="GO" id="GO:0032720">
    <property type="term" value="P:negative regulation of tumor necrosis factor production"/>
    <property type="evidence" value="ECO:0000315"/>
    <property type="project" value="RGD"/>
</dbReference>
<dbReference type="GO" id="GO:0051402">
    <property type="term" value="P:neuron apoptotic process"/>
    <property type="evidence" value="ECO:0000315"/>
    <property type="project" value="RGD"/>
</dbReference>
<dbReference type="GO" id="GO:0001542">
    <property type="term" value="P:ovulation from ovarian follicle"/>
    <property type="evidence" value="ECO:0000266"/>
    <property type="project" value="RGD"/>
</dbReference>
<dbReference type="GO" id="GO:0002821">
    <property type="term" value="P:positive regulation of adaptive immune response"/>
    <property type="evidence" value="ECO:0000266"/>
    <property type="project" value="RGD"/>
</dbReference>
<dbReference type="GO" id="GO:1904179">
    <property type="term" value="P:positive regulation of adipose tissue development"/>
    <property type="evidence" value="ECO:0000266"/>
    <property type="project" value="RGD"/>
</dbReference>
<dbReference type="GO" id="GO:0045766">
    <property type="term" value="P:positive regulation of angiogenesis"/>
    <property type="evidence" value="ECO:0000266"/>
    <property type="project" value="RGD"/>
</dbReference>
<dbReference type="GO" id="GO:0043065">
    <property type="term" value="P:positive regulation of apoptotic process"/>
    <property type="evidence" value="ECO:0000266"/>
    <property type="project" value="RGD"/>
</dbReference>
<dbReference type="GO" id="GO:2001171">
    <property type="term" value="P:positive regulation of ATP biosynthetic process"/>
    <property type="evidence" value="ECO:0000266"/>
    <property type="project" value="RGD"/>
</dbReference>
<dbReference type="GO" id="GO:0043536">
    <property type="term" value="P:positive regulation of blood vessel endothelial cell migration"/>
    <property type="evidence" value="ECO:0000266"/>
    <property type="project" value="RGD"/>
</dbReference>
<dbReference type="GO" id="GO:0061051">
    <property type="term" value="P:positive regulation of cell growth involved in cardiac muscle cell development"/>
    <property type="evidence" value="ECO:0000315"/>
    <property type="project" value="RGD"/>
</dbReference>
<dbReference type="GO" id="GO:0008284">
    <property type="term" value="P:positive regulation of cell population proliferation"/>
    <property type="evidence" value="ECO:0000266"/>
    <property type="project" value="RGD"/>
</dbReference>
<dbReference type="GO" id="GO:2000774">
    <property type="term" value="P:positive regulation of cellular senescence"/>
    <property type="evidence" value="ECO:0000266"/>
    <property type="project" value="RGD"/>
</dbReference>
<dbReference type="GO" id="GO:0010875">
    <property type="term" value="P:positive regulation of cholesterol efflux"/>
    <property type="evidence" value="ECO:0000266"/>
    <property type="project" value="RGD"/>
</dbReference>
<dbReference type="GO" id="GO:0045739">
    <property type="term" value="P:positive regulation of DNA repair"/>
    <property type="evidence" value="ECO:0000266"/>
    <property type="project" value="RGD"/>
</dbReference>
<dbReference type="GO" id="GO:2000781">
    <property type="term" value="P:positive regulation of double-strand break repair"/>
    <property type="evidence" value="ECO:0000266"/>
    <property type="project" value="RGD"/>
</dbReference>
<dbReference type="GO" id="GO:1902237">
    <property type="term" value="P:positive regulation of endoplasmic reticulum stress-induced intrinsic apoptotic signaling pathway"/>
    <property type="evidence" value="ECO:0000266"/>
    <property type="project" value="RGD"/>
</dbReference>
<dbReference type="GO" id="GO:0001938">
    <property type="term" value="P:positive regulation of endothelial cell proliferation"/>
    <property type="evidence" value="ECO:0000266"/>
    <property type="project" value="RGD"/>
</dbReference>
<dbReference type="GO" id="GO:0010628">
    <property type="term" value="P:positive regulation of gene expression"/>
    <property type="evidence" value="ECO:0000266"/>
    <property type="project" value="RGD"/>
</dbReference>
<dbReference type="GO" id="GO:0045722">
    <property type="term" value="P:positive regulation of gluconeogenesis"/>
    <property type="evidence" value="ECO:0000315"/>
    <property type="project" value="RGD"/>
</dbReference>
<dbReference type="GO" id="GO:1904710">
    <property type="term" value="P:positive regulation of granulosa cell apoptotic process"/>
    <property type="evidence" value="ECO:0000266"/>
    <property type="project" value="RGD"/>
</dbReference>
<dbReference type="GO" id="GO:0010460">
    <property type="term" value="P:positive regulation of heart rate"/>
    <property type="evidence" value="ECO:0000315"/>
    <property type="project" value="RGD"/>
</dbReference>
<dbReference type="GO" id="GO:0046628">
    <property type="term" value="P:positive regulation of insulin receptor signaling pathway"/>
    <property type="evidence" value="ECO:0000266"/>
    <property type="project" value="RGD"/>
</dbReference>
<dbReference type="GO" id="GO:0035774">
    <property type="term" value="P:positive regulation of insulin secretion involved in cellular response to glucose stimulus"/>
    <property type="evidence" value="ECO:0000315"/>
    <property type="project" value="RGD"/>
</dbReference>
<dbReference type="GO" id="GO:0016239">
    <property type="term" value="P:positive regulation of macroautophagy"/>
    <property type="evidence" value="ECO:0000266"/>
    <property type="project" value="RGD"/>
</dbReference>
<dbReference type="GO" id="GO:2000111">
    <property type="term" value="P:positive regulation of macrophage apoptotic process"/>
    <property type="evidence" value="ECO:0000266"/>
    <property type="project" value="RGD"/>
</dbReference>
<dbReference type="GO" id="GO:0060907">
    <property type="term" value="P:positive regulation of macrophage cytokine production"/>
    <property type="evidence" value="ECO:0000266"/>
    <property type="project" value="RGD"/>
</dbReference>
<dbReference type="GO" id="GO:0045348">
    <property type="term" value="P:positive regulation of MHC class II biosynthetic process"/>
    <property type="evidence" value="ECO:0000266"/>
    <property type="project" value="RGD"/>
</dbReference>
<dbReference type="GO" id="GO:0010918">
    <property type="term" value="P:positive regulation of mitochondrial membrane potential"/>
    <property type="evidence" value="ECO:0000266"/>
    <property type="project" value="RGD"/>
</dbReference>
<dbReference type="GO" id="GO:0010976">
    <property type="term" value="P:positive regulation of neuron projection development"/>
    <property type="evidence" value="ECO:0000315"/>
    <property type="project" value="RGD"/>
</dbReference>
<dbReference type="GO" id="GO:0051897">
    <property type="term" value="P:positive regulation of phosphatidylinositol 3-kinase/protein kinase B signal transduction"/>
    <property type="evidence" value="ECO:0000266"/>
    <property type="project" value="RGD"/>
</dbReference>
<dbReference type="GO" id="GO:0032436">
    <property type="term" value="P:positive regulation of proteasomal ubiquitin-dependent protein catabolic process"/>
    <property type="evidence" value="ECO:0000266"/>
    <property type="project" value="RGD"/>
</dbReference>
<dbReference type="GO" id="GO:0014858">
    <property type="term" value="P:positive regulation of skeletal muscle cell proliferation"/>
    <property type="evidence" value="ECO:0000315"/>
    <property type="project" value="RGD"/>
</dbReference>
<dbReference type="GO" id="GO:0051152">
    <property type="term" value="P:positive regulation of smooth muscle cell differentiation"/>
    <property type="evidence" value="ECO:0000266"/>
    <property type="project" value="RGD"/>
</dbReference>
<dbReference type="GO" id="GO:2000614">
    <property type="term" value="P:positive regulation of thyroid-stimulating hormone secretion"/>
    <property type="evidence" value="ECO:0000315"/>
    <property type="project" value="RGD"/>
</dbReference>
<dbReference type="GO" id="GO:0045944">
    <property type="term" value="P:positive regulation of transcription by RNA polymerase II"/>
    <property type="evidence" value="ECO:0000266"/>
    <property type="project" value="RGD"/>
</dbReference>
<dbReference type="GO" id="GO:0010898">
    <property type="term" value="P:positive regulation of triglyceride catabolic process"/>
    <property type="evidence" value="ECO:0000266"/>
    <property type="project" value="RGD"/>
</dbReference>
<dbReference type="GO" id="GO:0043161">
    <property type="term" value="P:proteasome-mediated ubiquitin-dependent protein catabolic process"/>
    <property type="evidence" value="ECO:0000266"/>
    <property type="project" value="RGD"/>
</dbReference>
<dbReference type="GO" id="GO:0106230">
    <property type="term" value="P:protein depropionylation"/>
    <property type="evidence" value="ECO:0000250"/>
    <property type="project" value="UniProtKB"/>
</dbReference>
<dbReference type="GO" id="GO:0031648">
    <property type="term" value="P:protein destabilization"/>
    <property type="evidence" value="ECO:0000266"/>
    <property type="project" value="RGD"/>
</dbReference>
<dbReference type="GO" id="GO:0016567">
    <property type="term" value="P:protein ubiquitination"/>
    <property type="evidence" value="ECO:0000266"/>
    <property type="project" value="RGD"/>
</dbReference>
<dbReference type="GO" id="GO:0000720">
    <property type="term" value="P:pyrimidine dimer repair by nucleotide-excision repair"/>
    <property type="evidence" value="ECO:0000266"/>
    <property type="project" value="RGD"/>
</dbReference>
<dbReference type="GO" id="GO:0000183">
    <property type="term" value="P:rDNA heterochromatin formation"/>
    <property type="evidence" value="ECO:0000266"/>
    <property type="project" value="RGD"/>
</dbReference>
<dbReference type="GO" id="GO:0042981">
    <property type="term" value="P:regulation of apoptotic process"/>
    <property type="evidence" value="ECO:0000266"/>
    <property type="project" value="RGD"/>
</dbReference>
<dbReference type="GO" id="GO:0070857">
    <property type="term" value="P:regulation of bile acid biosynthetic process"/>
    <property type="evidence" value="ECO:0000266"/>
    <property type="project" value="RGD"/>
</dbReference>
<dbReference type="GO" id="GO:0090335">
    <property type="term" value="P:regulation of brown fat cell differentiation"/>
    <property type="evidence" value="ECO:0000266"/>
    <property type="project" value="RGD"/>
</dbReference>
<dbReference type="GO" id="GO:0042127">
    <property type="term" value="P:regulation of cell population proliferation"/>
    <property type="evidence" value="ECO:0000266"/>
    <property type="project" value="RGD"/>
</dbReference>
<dbReference type="GO" id="GO:0010824">
    <property type="term" value="P:regulation of centrosome duplication"/>
    <property type="evidence" value="ECO:0000250"/>
    <property type="project" value="UniProtKB"/>
</dbReference>
<dbReference type="GO" id="GO:0010906">
    <property type="term" value="P:regulation of glucose metabolic process"/>
    <property type="evidence" value="ECO:0000266"/>
    <property type="project" value="RGD"/>
</dbReference>
<dbReference type="GO" id="GO:0010883">
    <property type="term" value="P:regulation of lipid storage"/>
    <property type="evidence" value="ECO:0000266"/>
    <property type="project" value="RGD"/>
</dbReference>
<dbReference type="GO" id="GO:0007346">
    <property type="term" value="P:regulation of mitotic cell cycle"/>
    <property type="evidence" value="ECO:0000266"/>
    <property type="project" value="RGD"/>
</dbReference>
<dbReference type="GO" id="GO:0035358">
    <property type="term" value="P:regulation of peroxisome proliferator activated receptor signaling pathway"/>
    <property type="evidence" value="ECO:0000266"/>
    <property type="project" value="RGD"/>
</dbReference>
<dbReference type="GO" id="GO:0034391">
    <property type="term" value="P:regulation of smooth muscle cell apoptotic process"/>
    <property type="evidence" value="ECO:0000266"/>
    <property type="project" value="RGD"/>
</dbReference>
<dbReference type="GO" id="GO:0046015">
    <property type="term" value="P:regulation of transcription by glucose"/>
    <property type="evidence" value="ECO:0000266"/>
    <property type="project" value="RGD"/>
</dbReference>
<dbReference type="GO" id="GO:0042220">
    <property type="term" value="P:response to cocaine"/>
    <property type="evidence" value="ECO:0000270"/>
    <property type="project" value="RGD"/>
</dbReference>
<dbReference type="GO" id="GO:0045471">
    <property type="term" value="P:response to ethanol"/>
    <property type="evidence" value="ECO:0000314"/>
    <property type="project" value="RGD"/>
</dbReference>
<dbReference type="GO" id="GO:1902617">
    <property type="term" value="P:response to fluoride"/>
    <property type="evidence" value="ECO:0000270"/>
    <property type="project" value="RGD"/>
</dbReference>
<dbReference type="GO" id="GO:0042542">
    <property type="term" value="P:response to hydrogen peroxide"/>
    <property type="evidence" value="ECO:0000266"/>
    <property type="project" value="RGD"/>
</dbReference>
<dbReference type="GO" id="GO:0032868">
    <property type="term" value="P:response to insulin"/>
    <property type="evidence" value="ECO:0000266"/>
    <property type="project" value="RGD"/>
</dbReference>
<dbReference type="GO" id="GO:1904373">
    <property type="term" value="P:response to kainic acid"/>
    <property type="evidence" value="ECO:0000270"/>
    <property type="project" value="RGD"/>
</dbReference>
<dbReference type="GO" id="GO:0044321">
    <property type="term" value="P:response to leptin"/>
    <property type="evidence" value="ECO:0000266"/>
    <property type="project" value="RGD"/>
</dbReference>
<dbReference type="GO" id="GO:0010046">
    <property type="term" value="P:response to mycotoxin"/>
    <property type="evidence" value="ECO:0000270"/>
    <property type="project" value="RGD"/>
</dbReference>
<dbReference type="GO" id="GO:0031667">
    <property type="term" value="P:response to nutrient levels"/>
    <property type="evidence" value="ECO:0000270"/>
    <property type="project" value="RGD"/>
</dbReference>
<dbReference type="GO" id="GO:0006979">
    <property type="term" value="P:response to oxidative stress"/>
    <property type="evidence" value="ECO:0000266"/>
    <property type="project" value="RGD"/>
</dbReference>
<dbReference type="GO" id="GO:1904638">
    <property type="term" value="P:response to resveratrol"/>
    <property type="evidence" value="ECO:0000270"/>
    <property type="project" value="RGD"/>
</dbReference>
<dbReference type="GO" id="GO:0000012">
    <property type="term" value="P:single strand break repair"/>
    <property type="evidence" value="ECO:0000266"/>
    <property type="project" value="RGD"/>
</dbReference>
<dbReference type="GO" id="GO:0007283">
    <property type="term" value="P:spermatogenesis"/>
    <property type="evidence" value="ECO:0000266"/>
    <property type="project" value="RGD"/>
</dbReference>
<dbReference type="GO" id="GO:0090400">
    <property type="term" value="P:stress-induced premature senescence"/>
    <property type="evidence" value="ECO:0000266"/>
    <property type="project" value="RGD"/>
</dbReference>
<dbReference type="GO" id="GO:0007179">
    <property type="term" value="P:transforming growth factor beta receptor signaling pathway"/>
    <property type="evidence" value="ECO:0000266"/>
    <property type="project" value="RGD"/>
</dbReference>
<dbReference type="GO" id="GO:0006642">
    <property type="term" value="P:triglyceride mobilization"/>
    <property type="evidence" value="ECO:0000266"/>
    <property type="project" value="RGD"/>
</dbReference>
<dbReference type="GO" id="GO:0070914">
    <property type="term" value="P:UV-damage excision repair"/>
    <property type="evidence" value="ECO:0000266"/>
    <property type="project" value="RGD"/>
</dbReference>
<dbReference type="GO" id="GO:0042311">
    <property type="term" value="P:vasodilation"/>
    <property type="evidence" value="ECO:0000315"/>
    <property type="project" value="RGD"/>
</dbReference>
<dbReference type="GO" id="GO:0050872">
    <property type="term" value="P:white fat cell differentiation"/>
    <property type="evidence" value="ECO:0000266"/>
    <property type="project" value="RGD"/>
</dbReference>
<dbReference type="CDD" id="cd01408">
    <property type="entry name" value="SIRT1"/>
    <property type="match status" value="1"/>
</dbReference>
<dbReference type="FunFam" id="3.30.1600.10:FF:000013">
    <property type="entry name" value="NAD-dependent protein deacetylase sirtuin-1"/>
    <property type="match status" value="2"/>
</dbReference>
<dbReference type="Gene3D" id="3.30.1600.10">
    <property type="entry name" value="SIR2/SIRT2 'Small Domain"/>
    <property type="match status" value="1"/>
</dbReference>
<dbReference type="Gene3D" id="3.40.50.1220">
    <property type="entry name" value="TPP-binding domain"/>
    <property type="match status" value="1"/>
</dbReference>
<dbReference type="InterPro" id="IPR029035">
    <property type="entry name" value="DHS-like_NAD/FAD-binding_dom"/>
</dbReference>
<dbReference type="InterPro" id="IPR050134">
    <property type="entry name" value="NAD-dep_sirtuin_deacylases"/>
</dbReference>
<dbReference type="InterPro" id="IPR003000">
    <property type="entry name" value="Sirtuin"/>
</dbReference>
<dbReference type="InterPro" id="IPR026591">
    <property type="entry name" value="Sirtuin_cat_small_dom_sf"/>
</dbReference>
<dbReference type="InterPro" id="IPR026590">
    <property type="entry name" value="Ssirtuin_cat_dom"/>
</dbReference>
<dbReference type="PANTHER" id="PTHR11085:SF9">
    <property type="entry name" value="NAD-DEPENDENT PROTEIN DEACETYLASE SIRTUIN-1"/>
    <property type="match status" value="1"/>
</dbReference>
<dbReference type="PANTHER" id="PTHR11085">
    <property type="entry name" value="NAD-DEPENDENT PROTEIN DEACYLASE SIRTUIN-5, MITOCHONDRIAL-RELATED"/>
    <property type="match status" value="1"/>
</dbReference>
<dbReference type="Pfam" id="PF02146">
    <property type="entry name" value="SIR2"/>
    <property type="match status" value="1"/>
</dbReference>
<dbReference type="SUPFAM" id="SSF52467">
    <property type="entry name" value="DHS-like NAD/FAD-binding domain"/>
    <property type="match status" value="1"/>
</dbReference>
<dbReference type="PROSITE" id="PS50305">
    <property type="entry name" value="SIRTUIN"/>
    <property type="match status" value="1"/>
</dbReference>
<proteinExistence type="inferred from homology"/>
<accession>A0A0G2JZ79</accession>
<keyword id="KW-0007">Acetylation</keyword>
<keyword id="KW-0053">Apoptosis</keyword>
<keyword id="KW-0090">Biological rhythms</keyword>
<keyword id="KW-0963">Cytoplasm</keyword>
<keyword id="KW-0217">Developmental protein</keyword>
<keyword id="KW-0221">Differentiation</keyword>
<keyword id="KW-0479">Metal-binding</keyword>
<keyword id="KW-0488">Methylation</keyword>
<keyword id="KW-0517">Myogenesis</keyword>
<keyword id="KW-0520">NAD</keyword>
<keyword id="KW-0539">Nucleus</keyword>
<keyword id="KW-0597">Phosphoprotein</keyword>
<keyword id="KW-1185">Reference proteome</keyword>
<keyword id="KW-0702">S-nitrosylation</keyword>
<keyword id="KW-0804">Transcription</keyword>
<keyword id="KW-0805">Transcription regulation</keyword>
<keyword id="KW-0808">Transferase</keyword>
<keyword id="KW-0832">Ubl conjugation</keyword>
<keyword id="KW-0862">Zinc</keyword>
<feature type="chain" id="PRO_0000436411" description="NAD-dependent protein deacetylase sirtuin-1">
    <location>
        <begin position="1"/>
        <end position="555"/>
    </location>
</feature>
<feature type="domain" description="Deacetylase sirtuin-type" evidence="5">
    <location>
        <begin position="44"/>
        <end position="304"/>
    </location>
</feature>
<feature type="region of interest" description="Required for interaction with the sumoylated form of CCAR2" evidence="4">
    <location>
        <begin position="64"/>
        <end position="67"/>
    </location>
</feature>
<feature type="region of interest" description="Disordered" evidence="6">
    <location>
        <begin position="335"/>
        <end position="354"/>
    </location>
</feature>
<feature type="region of interest" description="Disordered" evidence="6">
    <location>
        <begin position="469"/>
        <end position="529"/>
    </location>
</feature>
<feature type="short sequence motif" description="Nuclear localization signal" evidence="3">
    <location>
        <begin position="39"/>
        <end position="46"/>
    </location>
</feature>
<feature type="short sequence motif" description="Nuclear export signal" evidence="3">
    <location>
        <begin position="241"/>
        <end position="247"/>
    </location>
</feature>
<feature type="compositionally biased region" description="Polar residues" evidence="6">
    <location>
        <begin position="345"/>
        <end position="354"/>
    </location>
</feature>
<feature type="compositionally biased region" description="Low complexity" evidence="6">
    <location>
        <begin position="473"/>
        <end position="493"/>
    </location>
</feature>
<feature type="compositionally biased region" description="Acidic residues" evidence="6">
    <location>
        <begin position="494"/>
        <end position="514"/>
    </location>
</feature>
<feature type="active site" description="Proton acceptor" evidence="5">
    <location>
        <position position="171"/>
    </location>
</feature>
<feature type="binding site" evidence="2">
    <location>
        <begin position="69"/>
        <end position="88"/>
    </location>
    <ligand>
        <name>NAD(+)</name>
        <dbReference type="ChEBI" id="CHEBI:57540"/>
    </ligand>
</feature>
<feature type="binding site" evidence="2">
    <location>
        <begin position="153"/>
        <end position="156"/>
    </location>
    <ligand>
        <name>NAD(+)</name>
        <dbReference type="ChEBI" id="CHEBI:57540"/>
    </ligand>
</feature>
<feature type="binding site" evidence="5">
    <location>
        <position position="179"/>
    </location>
    <ligand>
        <name>Zn(2+)</name>
        <dbReference type="ChEBI" id="CHEBI:29105"/>
    </ligand>
</feature>
<feature type="binding site" evidence="5">
    <location>
        <position position="182"/>
    </location>
    <ligand>
        <name>Zn(2+)</name>
        <dbReference type="ChEBI" id="CHEBI:29105"/>
    </ligand>
</feature>
<feature type="binding site" evidence="5">
    <location>
        <position position="203"/>
    </location>
    <ligand>
        <name>Zn(2+)</name>
        <dbReference type="ChEBI" id="CHEBI:29105"/>
    </ligand>
</feature>
<feature type="binding site" evidence="5">
    <location>
        <position position="206"/>
    </location>
    <ligand>
        <name>Zn(2+)</name>
        <dbReference type="ChEBI" id="CHEBI:29105"/>
    </ligand>
</feature>
<feature type="binding site" evidence="2">
    <location>
        <begin position="248"/>
        <end position="250"/>
    </location>
    <ligand>
        <name>NAD(+)</name>
        <dbReference type="ChEBI" id="CHEBI:57540"/>
    </ligand>
</feature>
<feature type="binding site" evidence="2">
    <location>
        <begin position="273"/>
        <end position="275"/>
    </location>
    <ligand>
        <name>NAD(+)</name>
        <dbReference type="ChEBI" id="CHEBI:57540"/>
    </ligand>
</feature>
<feature type="binding site" evidence="1">
    <location>
        <position position="290"/>
    </location>
    <ligand>
        <name>NAD(+)</name>
        <dbReference type="ChEBI" id="CHEBI:57540"/>
    </ligand>
</feature>
<feature type="modified residue" description="N6-acetyllysine" evidence="3">
    <location>
        <position position="46"/>
    </location>
</feature>
<feature type="modified residue" description="N6-acetyllysine" evidence="3">
    <location>
        <position position="185"/>
    </location>
</feature>
<feature type="modified residue" description="S-nitrosocysteine" evidence="3">
    <location>
        <position position="203"/>
    </location>
</feature>
<feature type="modified residue" description="S-nitrosocysteine" evidence="3">
    <location>
        <position position="206"/>
    </location>
</feature>
<feature type="modified residue" description="N6-acetyllysine" evidence="3">
    <location>
        <position position="238"/>
    </location>
</feature>
<feature type="modified residue" description="N6-acetyllysine" evidence="3">
    <location>
        <position position="321"/>
    </location>
</feature>
<feature type="modified residue" description="Phosphothreonine" evidence="4">
    <location>
        <position position="338"/>
    </location>
</feature>
<feature type="modified residue" description="Phosphoserine" evidence="4">
    <location>
        <position position="343"/>
    </location>
</feature>
<feature type="modified residue" description="Phosphothreonine" evidence="4">
    <location>
        <position position="352"/>
    </location>
</feature>
<feature type="modified residue" description="N6-acetyllysine" evidence="3">
    <location>
        <position position="417"/>
    </location>
</feature>
<feature type="modified residue" description="Phosphoserine" evidence="3">
    <location>
        <position position="466"/>
    </location>
</feature>
<feature type="modified residue" description="Phosphoserine" evidence="4">
    <location>
        <position position="468"/>
    </location>
</feature>
<feature type="modified residue" description="Phosphoserine" evidence="4">
    <location>
        <position position="552"/>
    </location>
</feature>